<protein>
    <recommendedName>
        <fullName evidence="2">Small ribosomal subunit protein uS12</fullName>
    </recommendedName>
    <alternativeName>
        <fullName evidence="3">30S ribosomal protein S12</fullName>
    </alternativeName>
</protein>
<accession>B4TKM3</accession>
<name>RS12_SALHS</name>
<sequence>MATVNQLVRKPRARKVAKSNVPALEACPQKRGVCTRVYTTTPKKPNSALRKVCRVRLTNGFEVTSYIGGEGHNLQEHSVILIRGGRVKDLPGVRYHTVRGALDCSGVKDRKQARSKYGVKRPKA</sequence>
<reference key="1">
    <citation type="journal article" date="2011" name="J. Bacteriol.">
        <title>Comparative genomics of 28 Salmonella enterica isolates: evidence for CRISPR-mediated adaptive sublineage evolution.</title>
        <authorList>
            <person name="Fricke W.F."/>
            <person name="Mammel M.K."/>
            <person name="McDermott P.F."/>
            <person name="Tartera C."/>
            <person name="White D.G."/>
            <person name="Leclerc J.E."/>
            <person name="Ravel J."/>
            <person name="Cebula T.A."/>
        </authorList>
    </citation>
    <scope>NUCLEOTIDE SEQUENCE [LARGE SCALE GENOMIC DNA]</scope>
    <source>
        <strain>SL476</strain>
    </source>
</reference>
<proteinExistence type="inferred from homology"/>
<dbReference type="EMBL" id="CP001120">
    <property type="protein sequence ID" value="ACF68831.1"/>
    <property type="molecule type" value="Genomic_DNA"/>
</dbReference>
<dbReference type="RefSeq" id="WP_000246815.1">
    <property type="nucleotide sequence ID" value="NC_011083.1"/>
</dbReference>
<dbReference type="SMR" id="B4TKM3"/>
<dbReference type="GeneID" id="98390450"/>
<dbReference type="KEGG" id="seh:SeHA_C3753"/>
<dbReference type="HOGENOM" id="CLU_104295_1_2_6"/>
<dbReference type="Proteomes" id="UP000001866">
    <property type="component" value="Chromosome"/>
</dbReference>
<dbReference type="GO" id="GO:0015935">
    <property type="term" value="C:small ribosomal subunit"/>
    <property type="evidence" value="ECO:0007669"/>
    <property type="project" value="InterPro"/>
</dbReference>
<dbReference type="GO" id="GO:0019843">
    <property type="term" value="F:rRNA binding"/>
    <property type="evidence" value="ECO:0007669"/>
    <property type="project" value="UniProtKB-UniRule"/>
</dbReference>
<dbReference type="GO" id="GO:0003735">
    <property type="term" value="F:structural constituent of ribosome"/>
    <property type="evidence" value="ECO:0007669"/>
    <property type="project" value="InterPro"/>
</dbReference>
<dbReference type="GO" id="GO:0000049">
    <property type="term" value="F:tRNA binding"/>
    <property type="evidence" value="ECO:0007669"/>
    <property type="project" value="UniProtKB-UniRule"/>
</dbReference>
<dbReference type="GO" id="GO:0006412">
    <property type="term" value="P:translation"/>
    <property type="evidence" value="ECO:0007669"/>
    <property type="project" value="UniProtKB-UniRule"/>
</dbReference>
<dbReference type="CDD" id="cd03368">
    <property type="entry name" value="Ribosomal_S12"/>
    <property type="match status" value="1"/>
</dbReference>
<dbReference type="FunFam" id="2.40.50.140:FF:000001">
    <property type="entry name" value="30S ribosomal protein S12"/>
    <property type="match status" value="1"/>
</dbReference>
<dbReference type="Gene3D" id="2.40.50.140">
    <property type="entry name" value="Nucleic acid-binding proteins"/>
    <property type="match status" value="1"/>
</dbReference>
<dbReference type="HAMAP" id="MF_00403_B">
    <property type="entry name" value="Ribosomal_uS12_B"/>
    <property type="match status" value="1"/>
</dbReference>
<dbReference type="InterPro" id="IPR012340">
    <property type="entry name" value="NA-bd_OB-fold"/>
</dbReference>
<dbReference type="InterPro" id="IPR006032">
    <property type="entry name" value="Ribosomal_uS12"/>
</dbReference>
<dbReference type="InterPro" id="IPR005679">
    <property type="entry name" value="Ribosomal_uS12_bac"/>
</dbReference>
<dbReference type="NCBIfam" id="TIGR00981">
    <property type="entry name" value="rpsL_bact"/>
    <property type="match status" value="1"/>
</dbReference>
<dbReference type="PANTHER" id="PTHR11652">
    <property type="entry name" value="30S RIBOSOMAL PROTEIN S12 FAMILY MEMBER"/>
    <property type="match status" value="1"/>
</dbReference>
<dbReference type="Pfam" id="PF00164">
    <property type="entry name" value="Ribosom_S12_S23"/>
    <property type="match status" value="1"/>
</dbReference>
<dbReference type="PIRSF" id="PIRSF002133">
    <property type="entry name" value="Ribosomal_S12/S23"/>
    <property type="match status" value="1"/>
</dbReference>
<dbReference type="PRINTS" id="PR01034">
    <property type="entry name" value="RIBOSOMALS12"/>
</dbReference>
<dbReference type="SUPFAM" id="SSF50249">
    <property type="entry name" value="Nucleic acid-binding proteins"/>
    <property type="match status" value="1"/>
</dbReference>
<dbReference type="PROSITE" id="PS00055">
    <property type="entry name" value="RIBOSOMAL_S12"/>
    <property type="match status" value="1"/>
</dbReference>
<organism>
    <name type="scientific">Salmonella heidelberg (strain SL476)</name>
    <dbReference type="NCBI Taxonomy" id="454169"/>
    <lineage>
        <taxon>Bacteria</taxon>
        <taxon>Pseudomonadati</taxon>
        <taxon>Pseudomonadota</taxon>
        <taxon>Gammaproteobacteria</taxon>
        <taxon>Enterobacterales</taxon>
        <taxon>Enterobacteriaceae</taxon>
        <taxon>Salmonella</taxon>
    </lineage>
</organism>
<comment type="function">
    <text evidence="2">With S4 and S5 plays an important role in translational accuracy.</text>
</comment>
<comment type="function">
    <text evidence="2">Interacts with and stabilizes bases of the 16S rRNA that are involved in tRNA selection in the A site and with the mRNA backbone. Located at the interface of the 30S and 50S subunits, it traverses the body of the 30S subunit contacting proteins on the other side and probably holding the rRNA structure together. The combined cluster of proteins S8, S12 and S17 appears to hold together the shoulder and platform of the 30S subunit.</text>
</comment>
<comment type="subunit">
    <text evidence="2">Part of the 30S ribosomal subunit. Contacts proteins S8 and S17. May interact with IF1 in the 30S initiation complex.</text>
</comment>
<comment type="similarity">
    <text evidence="2">Belongs to the universal ribosomal protein uS12 family.</text>
</comment>
<keyword id="KW-0488">Methylation</keyword>
<keyword id="KW-0687">Ribonucleoprotein</keyword>
<keyword id="KW-0689">Ribosomal protein</keyword>
<keyword id="KW-0694">RNA-binding</keyword>
<keyword id="KW-0699">rRNA-binding</keyword>
<keyword id="KW-0820">tRNA-binding</keyword>
<gene>
    <name evidence="2" type="primary">rpsL</name>
    <name type="ordered locus">SeHA_C3753</name>
</gene>
<feature type="chain" id="PRO_1000123513" description="Small ribosomal subunit protein uS12">
    <location>
        <begin position="1"/>
        <end position="124"/>
    </location>
</feature>
<feature type="modified residue" description="3-methylthioaspartic acid" evidence="1">
    <location>
        <position position="89"/>
    </location>
</feature>
<evidence type="ECO:0000250" key="1"/>
<evidence type="ECO:0000255" key="2">
    <source>
        <dbReference type="HAMAP-Rule" id="MF_00403"/>
    </source>
</evidence>
<evidence type="ECO:0000305" key="3"/>